<sequence length="207" mass="20936">MKLQVAIDLLSTEAALELAGKVAEYVDIIELGTPLIEAEGLSVITAVKKAHPDKIVFADMKTMDAGELEADIAFKAGADLVTVLGSADDSTIAGAVKAAQAHNKGVVVDLIGIEDKATRAQEVRALGAKFVEMHAGLDEQAKPGFDLNGLLAAGEKARVPFSVAGGVKVATIPAVQKAGAEVAVAGGAIYGAADPAAAAKELRAAIA</sequence>
<feature type="chain" id="PRO_0000235167" description="3-hexulose-6-phosphate synthase">
    <location>
        <begin position="1"/>
        <end position="207"/>
    </location>
</feature>
<feature type="strand" evidence="3">
    <location>
        <begin position="2"/>
        <end position="7"/>
    </location>
</feature>
<feature type="helix" evidence="3">
    <location>
        <begin position="12"/>
        <end position="22"/>
    </location>
</feature>
<feature type="helix" evidence="3">
    <location>
        <begin position="23"/>
        <end position="25"/>
    </location>
</feature>
<feature type="strand" evidence="3">
    <location>
        <begin position="27"/>
        <end position="31"/>
    </location>
</feature>
<feature type="helix" evidence="3">
    <location>
        <begin position="33"/>
        <end position="39"/>
    </location>
</feature>
<feature type="helix" evidence="3">
    <location>
        <begin position="42"/>
        <end position="50"/>
    </location>
</feature>
<feature type="strand" evidence="3">
    <location>
        <begin position="54"/>
        <end position="62"/>
    </location>
</feature>
<feature type="helix" evidence="3">
    <location>
        <begin position="66"/>
        <end position="75"/>
    </location>
</feature>
<feature type="strand" evidence="3">
    <location>
        <begin position="79"/>
        <end position="84"/>
    </location>
</feature>
<feature type="helix" evidence="3">
    <location>
        <begin position="89"/>
        <end position="102"/>
    </location>
</feature>
<feature type="strand" evidence="3">
    <location>
        <begin position="105"/>
        <end position="109"/>
    </location>
</feature>
<feature type="helix" evidence="3">
    <location>
        <begin position="116"/>
        <end position="125"/>
    </location>
</feature>
<feature type="strand" evidence="3">
    <location>
        <begin position="129"/>
        <end position="134"/>
    </location>
</feature>
<feature type="helix" evidence="3">
    <location>
        <begin position="137"/>
        <end position="140"/>
    </location>
</feature>
<feature type="helix" evidence="3">
    <location>
        <begin position="148"/>
        <end position="157"/>
    </location>
</feature>
<feature type="strand" evidence="3">
    <location>
        <begin position="161"/>
        <end position="166"/>
    </location>
</feature>
<feature type="helix" evidence="3">
    <location>
        <begin position="169"/>
        <end position="171"/>
    </location>
</feature>
<feature type="helix" evidence="3">
    <location>
        <begin position="172"/>
        <end position="177"/>
    </location>
</feature>
<feature type="strand" evidence="3">
    <location>
        <begin position="181"/>
        <end position="186"/>
    </location>
</feature>
<feature type="helix" evidence="3">
    <location>
        <begin position="187"/>
        <end position="190"/>
    </location>
</feature>
<feature type="strand" evidence="3">
    <location>
        <begin position="192"/>
        <end position="194"/>
    </location>
</feature>
<feature type="helix" evidence="3">
    <location>
        <begin position="195"/>
        <end position="204"/>
    </location>
</feature>
<accession>Q9LBW4</accession>
<comment type="function">
    <text evidence="1">Catalyzes the condensation of ribulose 5-phosphate with formaldehyde to form 3-hexulose 6-phosphate.</text>
</comment>
<comment type="catalytic activity">
    <reaction>
        <text>D-ribulose 5-phosphate + formaldehyde = D-arabino-hex-3-ulose 6-phosphate</text>
        <dbReference type="Rhea" id="RHEA:25201"/>
        <dbReference type="ChEBI" id="CHEBI:16842"/>
        <dbReference type="ChEBI" id="CHEBI:58121"/>
        <dbReference type="ChEBI" id="CHEBI:58542"/>
        <dbReference type="EC" id="4.1.2.43"/>
    </reaction>
</comment>
<comment type="pathway">
    <text>One-carbon metabolism; formaldehyde assimilation via RuMP pathway; D-fructose 6-phosphate from D-ribulose 5-phosphate and formaldehyde: step 1/2.</text>
</comment>
<comment type="induction">
    <text evidence="1">By methanol or methylamine.</text>
</comment>
<comment type="similarity">
    <text evidence="2">Belongs to the HPS/KGPDC family. HPS subfamily.</text>
</comment>
<organism>
    <name type="scientific">Mycobacterium gastri</name>
    <dbReference type="NCBI Taxonomy" id="1777"/>
    <lineage>
        <taxon>Bacteria</taxon>
        <taxon>Bacillati</taxon>
        <taxon>Actinomycetota</taxon>
        <taxon>Actinomycetes</taxon>
        <taxon>Mycobacteriales</taxon>
        <taxon>Mycobacteriaceae</taxon>
        <taxon>Mycobacterium</taxon>
    </lineage>
</organism>
<gene>
    <name type="primary">rmpA</name>
</gene>
<evidence type="ECO:0000269" key="1">
    <source>
    </source>
</evidence>
<evidence type="ECO:0000305" key="2"/>
<evidence type="ECO:0007829" key="3">
    <source>
        <dbReference type="PDB" id="3AJX"/>
    </source>
</evidence>
<proteinExistence type="evidence at protein level"/>
<protein>
    <recommendedName>
        <fullName>3-hexulose-6-phosphate synthase</fullName>
        <shortName>HPS</shortName>
        <ecNumber>4.1.2.43</ecNumber>
    </recommendedName>
    <alternativeName>
        <fullName>D-arabino-3-hexulose-6-phosphate formaldehyde lyase</fullName>
    </alternativeName>
</protein>
<dbReference type="EC" id="4.1.2.43"/>
<dbReference type="EMBL" id="AB034913">
    <property type="protein sequence ID" value="BAA90546.1"/>
    <property type="molecule type" value="Genomic_DNA"/>
</dbReference>
<dbReference type="PDB" id="3AJX">
    <property type="method" value="X-ray"/>
    <property type="resolution" value="1.60 A"/>
    <property type="chains" value="A/B/C/D=1-207"/>
</dbReference>
<dbReference type="PDBsum" id="3AJX"/>
<dbReference type="SMR" id="Q9LBW4"/>
<dbReference type="BRENDA" id="4.1.2.43">
    <property type="organism ID" value="10297"/>
</dbReference>
<dbReference type="UniPathway" id="UPA00294">
    <property type="reaction ID" value="UER00434"/>
</dbReference>
<dbReference type="EvolutionaryTrace" id="Q9LBW4"/>
<dbReference type="GO" id="GO:0033982">
    <property type="term" value="F:3-dehydro-L-gulonate-6-phosphate decarboxylase activity"/>
    <property type="evidence" value="ECO:0007669"/>
    <property type="project" value="TreeGrafter"/>
</dbReference>
<dbReference type="GO" id="GO:0043801">
    <property type="term" value="F:hexulose-6-phosphate synthase activity"/>
    <property type="evidence" value="ECO:0007669"/>
    <property type="project" value="UniProtKB-EC"/>
</dbReference>
<dbReference type="GO" id="GO:0004590">
    <property type="term" value="F:orotidine-5'-phosphate decarboxylase activity"/>
    <property type="evidence" value="ECO:0007669"/>
    <property type="project" value="InterPro"/>
</dbReference>
<dbReference type="GO" id="GO:0006207">
    <property type="term" value="P:'de novo' pyrimidine nucleobase biosynthetic process"/>
    <property type="evidence" value="ECO:0007669"/>
    <property type="project" value="InterPro"/>
</dbReference>
<dbReference type="GO" id="GO:0019647">
    <property type="term" value="P:formaldehyde assimilation via ribulose monophosphate cycle"/>
    <property type="evidence" value="ECO:0007669"/>
    <property type="project" value="UniProtKB-UniPathway"/>
</dbReference>
<dbReference type="GO" id="GO:0019854">
    <property type="term" value="P:L-ascorbic acid catabolic process"/>
    <property type="evidence" value="ECO:0007669"/>
    <property type="project" value="TreeGrafter"/>
</dbReference>
<dbReference type="GO" id="GO:0006730">
    <property type="term" value="P:one-carbon metabolic process"/>
    <property type="evidence" value="ECO:0007669"/>
    <property type="project" value="UniProtKB-KW"/>
</dbReference>
<dbReference type="CDD" id="cd04726">
    <property type="entry name" value="KGPDC_HPS"/>
    <property type="match status" value="1"/>
</dbReference>
<dbReference type="FunFam" id="3.20.20.70:FF:000022">
    <property type="entry name" value="3-keto-L-gulonate-6-phosphate decarboxylase UlaD"/>
    <property type="match status" value="1"/>
</dbReference>
<dbReference type="Gene3D" id="3.20.20.70">
    <property type="entry name" value="Aldolase class I"/>
    <property type="match status" value="1"/>
</dbReference>
<dbReference type="InterPro" id="IPR017553">
    <property type="entry name" value="3-hexulose-6-phosphate_synth"/>
</dbReference>
<dbReference type="InterPro" id="IPR013785">
    <property type="entry name" value="Aldolase_TIM"/>
</dbReference>
<dbReference type="InterPro" id="IPR041710">
    <property type="entry name" value="HPS/KGPDC"/>
</dbReference>
<dbReference type="InterPro" id="IPR001754">
    <property type="entry name" value="OMPdeCOase_dom"/>
</dbReference>
<dbReference type="InterPro" id="IPR011060">
    <property type="entry name" value="RibuloseP-bd_barrel"/>
</dbReference>
<dbReference type="NCBIfam" id="TIGR03128">
    <property type="entry name" value="RuMP_HxlA"/>
    <property type="match status" value="1"/>
</dbReference>
<dbReference type="PANTHER" id="PTHR35039">
    <property type="entry name" value="3-KETO-L-GULONATE-6-PHOSPHATE DECARBOXYLASE SGBH-RELATED"/>
    <property type="match status" value="1"/>
</dbReference>
<dbReference type="PANTHER" id="PTHR35039:SF3">
    <property type="entry name" value="3-KETO-L-GULONATE-6-PHOSPHATE DECARBOXYLASE SGBH-RELATED"/>
    <property type="match status" value="1"/>
</dbReference>
<dbReference type="Pfam" id="PF00215">
    <property type="entry name" value="OMPdecase"/>
    <property type="match status" value="1"/>
</dbReference>
<dbReference type="SMART" id="SM00934">
    <property type="entry name" value="OMPdecase"/>
    <property type="match status" value="1"/>
</dbReference>
<dbReference type="SUPFAM" id="SSF51366">
    <property type="entry name" value="Ribulose-phoshate binding barrel"/>
    <property type="match status" value="1"/>
</dbReference>
<reference key="1">
    <citation type="journal article" date="2000" name="J. Bacteriol.">
        <title>A novel operon encoding formaldehyde fixation: the ribulose monophosphate pathway in the Gram-positive facultative methylotrophic bacterium Mycobacterium gastri MB19.</title>
        <authorList>
            <person name="Mitsui R."/>
            <person name="Sakai Y."/>
            <person name="Yasueda H."/>
            <person name="Kato N."/>
        </authorList>
    </citation>
    <scope>NUCLEOTIDE SEQUENCE [GENOMIC DNA]</scope>
    <scope>FUNCTION</scope>
    <scope>TRANSCRIPTIONAL REGULATION</scope>
    <source>
        <strain>MB19</strain>
    </source>
</reference>
<keyword id="KW-0002">3D-structure</keyword>
<keyword id="KW-0119">Carbohydrate metabolism</keyword>
<keyword id="KW-0456">Lyase</keyword>
<keyword id="KW-0554">One-carbon metabolism</keyword>
<name>HPS_MYCGS</name>